<feature type="chain" id="PRO_1000186949" description="Siroheme synthase">
    <location>
        <begin position="1"/>
        <end position="464"/>
    </location>
</feature>
<feature type="region of interest" description="Precorrin-2 dehydrogenase /sirohydrochlorin ferrochelatase" evidence="1">
    <location>
        <begin position="1"/>
        <end position="203"/>
    </location>
</feature>
<feature type="region of interest" description="Uroporphyrinogen-III C-methyltransferase" evidence="1">
    <location>
        <begin position="216"/>
        <end position="464"/>
    </location>
</feature>
<feature type="active site" description="Proton acceptor" evidence="1">
    <location>
        <position position="248"/>
    </location>
</feature>
<feature type="active site" description="Proton donor" evidence="1">
    <location>
        <position position="270"/>
    </location>
</feature>
<feature type="binding site" evidence="1">
    <location>
        <begin position="22"/>
        <end position="23"/>
    </location>
    <ligand>
        <name>NAD(+)</name>
        <dbReference type="ChEBI" id="CHEBI:57540"/>
    </ligand>
</feature>
<feature type="binding site" evidence="1">
    <location>
        <begin position="43"/>
        <end position="44"/>
    </location>
    <ligand>
        <name>NAD(+)</name>
        <dbReference type="ChEBI" id="CHEBI:57540"/>
    </ligand>
</feature>
<feature type="binding site" evidence="1">
    <location>
        <position position="225"/>
    </location>
    <ligand>
        <name>S-adenosyl-L-methionine</name>
        <dbReference type="ChEBI" id="CHEBI:59789"/>
    </ligand>
</feature>
<feature type="binding site" evidence="1">
    <location>
        <begin position="301"/>
        <end position="303"/>
    </location>
    <ligand>
        <name>S-adenosyl-L-methionine</name>
        <dbReference type="ChEBI" id="CHEBI:59789"/>
    </ligand>
</feature>
<feature type="binding site" evidence="1">
    <location>
        <position position="306"/>
    </location>
    <ligand>
        <name>S-adenosyl-L-methionine</name>
        <dbReference type="ChEBI" id="CHEBI:59789"/>
    </ligand>
</feature>
<feature type="binding site" evidence="1">
    <location>
        <begin position="331"/>
        <end position="332"/>
    </location>
    <ligand>
        <name>S-adenosyl-L-methionine</name>
        <dbReference type="ChEBI" id="CHEBI:59789"/>
    </ligand>
</feature>
<feature type="binding site" evidence="1">
    <location>
        <position position="383"/>
    </location>
    <ligand>
        <name>S-adenosyl-L-methionine</name>
        <dbReference type="ChEBI" id="CHEBI:59789"/>
    </ligand>
</feature>
<feature type="binding site" evidence="1">
    <location>
        <position position="412"/>
    </location>
    <ligand>
        <name>S-adenosyl-L-methionine</name>
        <dbReference type="ChEBI" id="CHEBI:59789"/>
    </ligand>
</feature>
<feature type="modified residue" description="Phosphoserine" evidence="1">
    <location>
        <position position="128"/>
    </location>
</feature>
<proteinExistence type="inferred from homology"/>
<gene>
    <name evidence="1" type="primary">cysG</name>
    <name type="ordered locus">PputW619_3403</name>
</gene>
<dbReference type="EC" id="2.1.1.107" evidence="1"/>
<dbReference type="EC" id="1.3.1.76" evidence="1"/>
<dbReference type="EC" id="4.99.1.4" evidence="1"/>
<dbReference type="EMBL" id="CP000949">
    <property type="protein sequence ID" value="ACA73887.1"/>
    <property type="molecule type" value="Genomic_DNA"/>
</dbReference>
<dbReference type="SMR" id="B1JBD9"/>
<dbReference type="STRING" id="390235.PputW619_3403"/>
<dbReference type="KEGG" id="ppw:PputW619_3403"/>
<dbReference type="eggNOG" id="COG0007">
    <property type="taxonomic scope" value="Bacteria"/>
</dbReference>
<dbReference type="eggNOG" id="COG1648">
    <property type="taxonomic scope" value="Bacteria"/>
</dbReference>
<dbReference type="HOGENOM" id="CLU_011276_2_1_6"/>
<dbReference type="OrthoDB" id="9815856at2"/>
<dbReference type="UniPathway" id="UPA00148">
    <property type="reaction ID" value="UER00211"/>
</dbReference>
<dbReference type="UniPathway" id="UPA00148">
    <property type="reaction ID" value="UER00222"/>
</dbReference>
<dbReference type="UniPathway" id="UPA00262">
    <property type="reaction ID" value="UER00211"/>
</dbReference>
<dbReference type="UniPathway" id="UPA00262">
    <property type="reaction ID" value="UER00222"/>
</dbReference>
<dbReference type="UniPathway" id="UPA00262">
    <property type="reaction ID" value="UER00376"/>
</dbReference>
<dbReference type="GO" id="GO:0051287">
    <property type="term" value="F:NAD binding"/>
    <property type="evidence" value="ECO:0007669"/>
    <property type="project" value="InterPro"/>
</dbReference>
<dbReference type="GO" id="GO:0043115">
    <property type="term" value="F:precorrin-2 dehydrogenase activity"/>
    <property type="evidence" value="ECO:0007669"/>
    <property type="project" value="UniProtKB-UniRule"/>
</dbReference>
<dbReference type="GO" id="GO:0051266">
    <property type="term" value="F:sirohydrochlorin ferrochelatase activity"/>
    <property type="evidence" value="ECO:0007669"/>
    <property type="project" value="UniProtKB-EC"/>
</dbReference>
<dbReference type="GO" id="GO:0004851">
    <property type="term" value="F:uroporphyrin-III C-methyltransferase activity"/>
    <property type="evidence" value="ECO:0007669"/>
    <property type="project" value="UniProtKB-UniRule"/>
</dbReference>
<dbReference type="GO" id="GO:0009236">
    <property type="term" value="P:cobalamin biosynthetic process"/>
    <property type="evidence" value="ECO:0007669"/>
    <property type="project" value="UniProtKB-UniRule"/>
</dbReference>
<dbReference type="GO" id="GO:0032259">
    <property type="term" value="P:methylation"/>
    <property type="evidence" value="ECO:0007669"/>
    <property type="project" value="UniProtKB-KW"/>
</dbReference>
<dbReference type="GO" id="GO:0019354">
    <property type="term" value="P:siroheme biosynthetic process"/>
    <property type="evidence" value="ECO:0007669"/>
    <property type="project" value="UniProtKB-UniRule"/>
</dbReference>
<dbReference type="CDD" id="cd11642">
    <property type="entry name" value="SUMT"/>
    <property type="match status" value="1"/>
</dbReference>
<dbReference type="FunFam" id="3.30.160.110:FF:000001">
    <property type="entry name" value="Siroheme synthase"/>
    <property type="match status" value="1"/>
</dbReference>
<dbReference type="FunFam" id="3.30.950.10:FF:000001">
    <property type="entry name" value="Siroheme synthase"/>
    <property type="match status" value="1"/>
</dbReference>
<dbReference type="FunFam" id="3.40.1010.10:FF:000001">
    <property type="entry name" value="Siroheme synthase"/>
    <property type="match status" value="1"/>
</dbReference>
<dbReference type="Gene3D" id="3.40.1010.10">
    <property type="entry name" value="Cobalt-precorrin-4 Transmethylase, Domain 1"/>
    <property type="match status" value="1"/>
</dbReference>
<dbReference type="Gene3D" id="3.30.950.10">
    <property type="entry name" value="Methyltransferase, Cobalt-precorrin-4 Transmethylase, Domain 2"/>
    <property type="match status" value="1"/>
</dbReference>
<dbReference type="Gene3D" id="3.40.50.720">
    <property type="entry name" value="NAD(P)-binding Rossmann-like Domain"/>
    <property type="match status" value="1"/>
</dbReference>
<dbReference type="Gene3D" id="1.10.8.210">
    <property type="entry name" value="Sirohaem synthase, dimerisation domain"/>
    <property type="match status" value="1"/>
</dbReference>
<dbReference type="Gene3D" id="3.30.160.110">
    <property type="entry name" value="Siroheme synthase, domain 2"/>
    <property type="match status" value="1"/>
</dbReference>
<dbReference type="HAMAP" id="MF_01646">
    <property type="entry name" value="Siroheme_synth"/>
    <property type="match status" value="1"/>
</dbReference>
<dbReference type="InterPro" id="IPR000878">
    <property type="entry name" value="4pyrrol_Mease"/>
</dbReference>
<dbReference type="InterPro" id="IPR035996">
    <property type="entry name" value="4pyrrol_Methylase_sf"/>
</dbReference>
<dbReference type="InterPro" id="IPR014777">
    <property type="entry name" value="4pyrrole_Mease_sub1"/>
</dbReference>
<dbReference type="InterPro" id="IPR014776">
    <property type="entry name" value="4pyrrole_Mease_sub2"/>
</dbReference>
<dbReference type="InterPro" id="IPR006366">
    <property type="entry name" value="CobA/CysG_C"/>
</dbReference>
<dbReference type="InterPro" id="IPR036291">
    <property type="entry name" value="NAD(P)-bd_dom_sf"/>
</dbReference>
<dbReference type="InterPro" id="IPR050161">
    <property type="entry name" value="Siro_Cobalamin_biosynth"/>
</dbReference>
<dbReference type="InterPro" id="IPR037115">
    <property type="entry name" value="Sirohaem_synt_dimer_dom_sf"/>
</dbReference>
<dbReference type="InterPro" id="IPR012409">
    <property type="entry name" value="Sirohaem_synth"/>
</dbReference>
<dbReference type="InterPro" id="IPR028281">
    <property type="entry name" value="Sirohaem_synthase_central"/>
</dbReference>
<dbReference type="InterPro" id="IPR019478">
    <property type="entry name" value="Sirohaem_synthase_dimer_dom"/>
</dbReference>
<dbReference type="InterPro" id="IPR006367">
    <property type="entry name" value="Sirohaem_synthase_N"/>
</dbReference>
<dbReference type="InterPro" id="IPR003043">
    <property type="entry name" value="Uropor_MeTrfase_CS"/>
</dbReference>
<dbReference type="NCBIfam" id="TIGR01469">
    <property type="entry name" value="cobA_cysG_Cterm"/>
    <property type="match status" value="1"/>
</dbReference>
<dbReference type="NCBIfam" id="TIGR01470">
    <property type="entry name" value="cysG_Nterm"/>
    <property type="match status" value="1"/>
</dbReference>
<dbReference type="NCBIfam" id="NF004790">
    <property type="entry name" value="PRK06136.1"/>
    <property type="match status" value="1"/>
</dbReference>
<dbReference type="NCBIfam" id="NF007922">
    <property type="entry name" value="PRK10637.1"/>
    <property type="match status" value="1"/>
</dbReference>
<dbReference type="PANTHER" id="PTHR45790:SF1">
    <property type="entry name" value="SIROHEME SYNTHASE"/>
    <property type="match status" value="1"/>
</dbReference>
<dbReference type="PANTHER" id="PTHR45790">
    <property type="entry name" value="SIROHEME SYNTHASE-RELATED"/>
    <property type="match status" value="1"/>
</dbReference>
<dbReference type="Pfam" id="PF10414">
    <property type="entry name" value="CysG_dimeriser"/>
    <property type="match status" value="1"/>
</dbReference>
<dbReference type="Pfam" id="PF13241">
    <property type="entry name" value="NAD_binding_7"/>
    <property type="match status" value="1"/>
</dbReference>
<dbReference type="Pfam" id="PF14824">
    <property type="entry name" value="Sirohm_synth_M"/>
    <property type="match status" value="1"/>
</dbReference>
<dbReference type="Pfam" id="PF00590">
    <property type="entry name" value="TP_methylase"/>
    <property type="match status" value="1"/>
</dbReference>
<dbReference type="PIRSF" id="PIRSF036426">
    <property type="entry name" value="Sirohaem_synth"/>
    <property type="match status" value="1"/>
</dbReference>
<dbReference type="SUPFAM" id="SSF51735">
    <property type="entry name" value="NAD(P)-binding Rossmann-fold domains"/>
    <property type="match status" value="1"/>
</dbReference>
<dbReference type="SUPFAM" id="SSF75615">
    <property type="entry name" value="Siroheme synthase middle domains-like"/>
    <property type="match status" value="1"/>
</dbReference>
<dbReference type="SUPFAM" id="SSF53790">
    <property type="entry name" value="Tetrapyrrole methylase"/>
    <property type="match status" value="1"/>
</dbReference>
<dbReference type="PROSITE" id="PS00840">
    <property type="entry name" value="SUMT_2"/>
    <property type="match status" value="1"/>
</dbReference>
<accession>B1JBD9</accession>
<protein>
    <recommendedName>
        <fullName evidence="1">Siroheme synthase</fullName>
    </recommendedName>
    <domain>
        <recommendedName>
            <fullName evidence="1">Uroporphyrinogen-III C-methyltransferase</fullName>
            <shortName evidence="1">Urogen III methylase</shortName>
            <ecNumber evidence="1">2.1.1.107</ecNumber>
        </recommendedName>
        <alternativeName>
            <fullName evidence="1">SUMT</fullName>
        </alternativeName>
        <alternativeName>
            <fullName evidence="1">Uroporphyrinogen III methylase</fullName>
            <shortName evidence="1">UROM</shortName>
        </alternativeName>
    </domain>
    <domain>
        <recommendedName>
            <fullName evidence="1">Precorrin-2 dehydrogenase</fullName>
            <ecNumber evidence="1">1.3.1.76</ecNumber>
        </recommendedName>
    </domain>
    <domain>
        <recommendedName>
            <fullName evidence="1">Sirohydrochlorin ferrochelatase</fullName>
            <ecNumber evidence="1">4.99.1.4</ecNumber>
        </recommendedName>
    </domain>
</protein>
<sequence>MDYLPLFHKLQGGRVLVVGGGEIALRKARLLADAGAALRVVAPEVDGQLAALAREGGGEVLVRGYQAADLVGCRLVIAATDDPGLNAQVSADAQALCVPVNVVDAPALCTVIFPAIVDRSPLVVAVSSGGDAPVLARLIRAKLETWIPSTYGELAALAARFRHKVKSLYPDVNQRRGFWETVFQGPIAERQLAGQGAEAERLLQAMVDGAPVQQGGEVYLVGAGPGDPDLLTFRALRLMQQADVVLYDRLVAPAIIEMCRRDAERIYVGKRRAEHAVPQDQINRLLVDLAREGKRVLRLKGGDPFIFGRGGEEIEELAEHGIPFQVVPGITAASGCSAYGGIPLTHRDYAQSVRFVTGHLKDGTSNLPWNDLVAPNQTLVFYMGLVGLPTICAELIRHGRASSTPAALVQQGTTRNQRVFTGTLADLPALVAQHEVHAPTLVIVGEVVQLREKLAWFEGSQQDQ</sequence>
<organism>
    <name type="scientific">Pseudomonas putida (strain W619)</name>
    <dbReference type="NCBI Taxonomy" id="390235"/>
    <lineage>
        <taxon>Bacteria</taxon>
        <taxon>Pseudomonadati</taxon>
        <taxon>Pseudomonadota</taxon>
        <taxon>Gammaproteobacteria</taxon>
        <taxon>Pseudomonadales</taxon>
        <taxon>Pseudomonadaceae</taxon>
        <taxon>Pseudomonas</taxon>
    </lineage>
</organism>
<reference key="1">
    <citation type="submission" date="2008-02" db="EMBL/GenBank/DDBJ databases">
        <title>Complete sequence of Pseudomonas putida W619.</title>
        <authorList>
            <person name="Copeland A."/>
            <person name="Lucas S."/>
            <person name="Lapidus A."/>
            <person name="Barry K."/>
            <person name="Detter J.C."/>
            <person name="Glavina del Rio T."/>
            <person name="Dalin E."/>
            <person name="Tice H."/>
            <person name="Pitluck S."/>
            <person name="Chain P."/>
            <person name="Malfatti S."/>
            <person name="Shin M."/>
            <person name="Vergez L."/>
            <person name="Schmutz J."/>
            <person name="Larimer F."/>
            <person name="Land M."/>
            <person name="Hauser L."/>
            <person name="Kyrpides N."/>
            <person name="Kim E."/>
            <person name="Taghavi S."/>
            <person name="Vangronsveld D."/>
            <person name="van der Lelie D."/>
            <person name="Richardson P."/>
        </authorList>
    </citation>
    <scope>NUCLEOTIDE SEQUENCE [LARGE SCALE GENOMIC DNA]</scope>
    <source>
        <strain>W619</strain>
    </source>
</reference>
<keyword id="KW-0169">Cobalamin biosynthesis</keyword>
<keyword id="KW-0456">Lyase</keyword>
<keyword id="KW-0489">Methyltransferase</keyword>
<keyword id="KW-0511">Multifunctional enzyme</keyword>
<keyword id="KW-0520">NAD</keyword>
<keyword id="KW-0560">Oxidoreductase</keyword>
<keyword id="KW-0597">Phosphoprotein</keyword>
<keyword id="KW-0627">Porphyrin biosynthesis</keyword>
<keyword id="KW-0949">S-adenosyl-L-methionine</keyword>
<keyword id="KW-0808">Transferase</keyword>
<evidence type="ECO:0000255" key="1">
    <source>
        <dbReference type="HAMAP-Rule" id="MF_01646"/>
    </source>
</evidence>
<name>CYSG_PSEPW</name>
<comment type="function">
    <text evidence="1">Multifunctional enzyme that catalyzes the SAM-dependent methylations of uroporphyrinogen III at position C-2 and C-7 to form precorrin-2 via precorrin-1. Then it catalyzes the NAD-dependent ring dehydrogenation of precorrin-2 to yield sirohydrochlorin. Finally, it catalyzes the ferrochelation of sirohydrochlorin to yield siroheme.</text>
</comment>
<comment type="catalytic activity">
    <reaction evidence="1">
        <text>uroporphyrinogen III + 2 S-adenosyl-L-methionine = precorrin-2 + 2 S-adenosyl-L-homocysteine + H(+)</text>
        <dbReference type="Rhea" id="RHEA:32459"/>
        <dbReference type="ChEBI" id="CHEBI:15378"/>
        <dbReference type="ChEBI" id="CHEBI:57308"/>
        <dbReference type="ChEBI" id="CHEBI:57856"/>
        <dbReference type="ChEBI" id="CHEBI:58827"/>
        <dbReference type="ChEBI" id="CHEBI:59789"/>
        <dbReference type="EC" id="2.1.1.107"/>
    </reaction>
</comment>
<comment type="catalytic activity">
    <reaction evidence="1">
        <text>precorrin-2 + NAD(+) = sirohydrochlorin + NADH + 2 H(+)</text>
        <dbReference type="Rhea" id="RHEA:15613"/>
        <dbReference type="ChEBI" id="CHEBI:15378"/>
        <dbReference type="ChEBI" id="CHEBI:57540"/>
        <dbReference type="ChEBI" id="CHEBI:57945"/>
        <dbReference type="ChEBI" id="CHEBI:58351"/>
        <dbReference type="ChEBI" id="CHEBI:58827"/>
        <dbReference type="EC" id="1.3.1.76"/>
    </reaction>
</comment>
<comment type="catalytic activity">
    <reaction evidence="1">
        <text>siroheme + 2 H(+) = sirohydrochlorin + Fe(2+)</text>
        <dbReference type="Rhea" id="RHEA:24360"/>
        <dbReference type="ChEBI" id="CHEBI:15378"/>
        <dbReference type="ChEBI" id="CHEBI:29033"/>
        <dbReference type="ChEBI" id="CHEBI:58351"/>
        <dbReference type="ChEBI" id="CHEBI:60052"/>
        <dbReference type="EC" id="4.99.1.4"/>
    </reaction>
</comment>
<comment type="pathway">
    <text evidence="1">Cofactor biosynthesis; adenosylcobalamin biosynthesis; precorrin-2 from uroporphyrinogen III: step 1/1.</text>
</comment>
<comment type="pathway">
    <text evidence="1">Cofactor biosynthesis; adenosylcobalamin biosynthesis; sirohydrochlorin from precorrin-2: step 1/1.</text>
</comment>
<comment type="pathway">
    <text evidence="1">Porphyrin-containing compound metabolism; siroheme biosynthesis; precorrin-2 from uroporphyrinogen III: step 1/1.</text>
</comment>
<comment type="pathway">
    <text evidence="1">Porphyrin-containing compound metabolism; siroheme biosynthesis; siroheme from sirohydrochlorin: step 1/1.</text>
</comment>
<comment type="pathway">
    <text evidence="1">Porphyrin-containing compound metabolism; siroheme biosynthesis; sirohydrochlorin from precorrin-2: step 1/1.</text>
</comment>
<comment type="similarity">
    <text evidence="1">In the N-terminal section; belongs to the precorrin-2 dehydrogenase / sirohydrochlorin ferrochelatase family.</text>
</comment>
<comment type="similarity">
    <text evidence="1">In the C-terminal section; belongs to the precorrin methyltransferase family.</text>
</comment>